<gene>
    <name evidence="1" type="primary">rplO</name>
    <name type="ordered locus">DSY0490</name>
</gene>
<protein>
    <recommendedName>
        <fullName evidence="1">Large ribosomal subunit protein uL15</fullName>
    </recommendedName>
    <alternativeName>
        <fullName evidence="3">50S ribosomal protein L15</fullName>
    </alternativeName>
</protein>
<feature type="chain" id="PRO_0000251506" description="Large ribosomal subunit protein uL15">
    <location>
        <begin position="1"/>
        <end position="147"/>
    </location>
</feature>
<feature type="region of interest" description="Disordered" evidence="2">
    <location>
        <begin position="1"/>
        <end position="58"/>
    </location>
</feature>
<feature type="compositionally biased region" description="Gly residues" evidence="2">
    <location>
        <begin position="21"/>
        <end position="31"/>
    </location>
</feature>
<feature type="compositionally biased region" description="Gly residues" evidence="2">
    <location>
        <begin position="42"/>
        <end position="52"/>
    </location>
</feature>
<organism>
    <name type="scientific">Desulfitobacterium hafniense (strain Y51)</name>
    <dbReference type="NCBI Taxonomy" id="138119"/>
    <lineage>
        <taxon>Bacteria</taxon>
        <taxon>Bacillati</taxon>
        <taxon>Bacillota</taxon>
        <taxon>Clostridia</taxon>
        <taxon>Eubacteriales</taxon>
        <taxon>Desulfitobacteriaceae</taxon>
        <taxon>Desulfitobacterium</taxon>
    </lineage>
</organism>
<comment type="function">
    <text evidence="1">Binds to the 23S rRNA.</text>
</comment>
<comment type="subunit">
    <text evidence="1">Part of the 50S ribosomal subunit.</text>
</comment>
<comment type="similarity">
    <text evidence="1">Belongs to the universal ribosomal protein uL15 family.</text>
</comment>
<proteinExistence type="inferred from homology"/>
<reference key="1">
    <citation type="journal article" date="2006" name="J. Bacteriol.">
        <title>Complete genome sequence of the dehalorespiring bacterium Desulfitobacterium hafniense Y51 and comparison with Dehalococcoides ethenogenes 195.</title>
        <authorList>
            <person name="Nonaka H."/>
            <person name="Keresztes G."/>
            <person name="Shinoda Y."/>
            <person name="Ikenaga Y."/>
            <person name="Abe M."/>
            <person name="Naito K."/>
            <person name="Inatomi K."/>
            <person name="Furukawa K."/>
            <person name="Inui M."/>
            <person name="Yukawa H."/>
        </authorList>
    </citation>
    <scope>NUCLEOTIDE SEQUENCE [LARGE SCALE GENOMIC DNA]</scope>
    <source>
        <strain>Y51</strain>
    </source>
</reference>
<sequence>MKLHELKPAQGSTKAPKRLGRGIGSGTGKTSGKGHKGQKARAGGGVRPGFEGGQQPLARRMPKRGFTNIFKKEYVVLNVRDLEERFENGAVVGYESLFEVGLIKTIKDGVKILGTGELTKALTVQVDKVSQTAAEKIVAAGGKVEVE</sequence>
<accession>Q250L3</accession>
<dbReference type="EMBL" id="AP008230">
    <property type="protein sequence ID" value="BAE82279.1"/>
    <property type="molecule type" value="Genomic_DNA"/>
</dbReference>
<dbReference type="RefSeq" id="WP_005810128.1">
    <property type="nucleotide sequence ID" value="NC_007907.1"/>
</dbReference>
<dbReference type="SMR" id="Q250L3"/>
<dbReference type="STRING" id="138119.DSY0490"/>
<dbReference type="KEGG" id="dsy:DSY0490"/>
<dbReference type="eggNOG" id="COG0200">
    <property type="taxonomic scope" value="Bacteria"/>
</dbReference>
<dbReference type="HOGENOM" id="CLU_055188_4_2_9"/>
<dbReference type="Proteomes" id="UP000001946">
    <property type="component" value="Chromosome"/>
</dbReference>
<dbReference type="GO" id="GO:0022625">
    <property type="term" value="C:cytosolic large ribosomal subunit"/>
    <property type="evidence" value="ECO:0007669"/>
    <property type="project" value="TreeGrafter"/>
</dbReference>
<dbReference type="GO" id="GO:0019843">
    <property type="term" value="F:rRNA binding"/>
    <property type="evidence" value="ECO:0007669"/>
    <property type="project" value="UniProtKB-UniRule"/>
</dbReference>
<dbReference type="GO" id="GO:0003735">
    <property type="term" value="F:structural constituent of ribosome"/>
    <property type="evidence" value="ECO:0007669"/>
    <property type="project" value="InterPro"/>
</dbReference>
<dbReference type="GO" id="GO:0006412">
    <property type="term" value="P:translation"/>
    <property type="evidence" value="ECO:0007669"/>
    <property type="project" value="UniProtKB-UniRule"/>
</dbReference>
<dbReference type="Gene3D" id="3.100.10.10">
    <property type="match status" value="1"/>
</dbReference>
<dbReference type="HAMAP" id="MF_01341">
    <property type="entry name" value="Ribosomal_uL15"/>
    <property type="match status" value="1"/>
</dbReference>
<dbReference type="InterPro" id="IPR030878">
    <property type="entry name" value="Ribosomal_uL15"/>
</dbReference>
<dbReference type="InterPro" id="IPR021131">
    <property type="entry name" value="Ribosomal_uL15/eL18"/>
</dbReference>
<dbReference type="InterPro" id="IPR036227">
    <property type="entry name" value="Ribosomal_uL15/eL18_sf"/>
</dbReference>
<dbReference type="InterPro" id="IPR005749">
    <property type="entry name" value="Ribosomal_uL15_bac-type"/>
</dbReference>
<dbReference type="InterPro" id="IPR001196">
    <property type="entry name" value="Ribosomal_uL15_CS"/>
</dbReference>
<dbReference type="NCBIfam" id="TIGR01071">
    <property type="entry name" value="rplO_bact"/>
    <property type="match status" value="1"/>
</dbReference>
<dbReference type="PANTHER" id="PTHR12934">
    <property type="entry name" value="50S RIBOSOMAL PROTEIN L15"/>
    <property type="match status" value="1"/>
</dbReference>
<dbReference type="PANTHER" id="PTHR12934:SF11">
    <property type="entry name" value="LARGE RIBOSOMAL SUBUNIT PROTEIN UL15M"/>
    <property type="match status" value="1"/>
</dbReference>
<dbReference type="Pfam" id="PF00828">
    <property type="entry name" value="Ribosomal_L27A"/>
    <property type="match status" value="1"/>
</dbReference>
<dbReference type="SUPFAM" id="SSF52080">
    <property type="entry name" value="Ribosomal proteins L15p and L18e"/>
    <property type="match status" value="1"/>
</dbReference>
<dbReference type="PROSITE" id="PS00475">
    <property type="entry name" value="RIBOSOMAL_L15"/>
    <property type="match status" value="1"/>
</dbReference>
<evidence type="ECO:0000255" key="1">
    <source>
        <dbReference type="HAMAP-Rule" id="MF_01341"/>
    </source>
</evidence>
<evidence type="ECO:0000256" key="2">
    <source>
        <dbReference type="SAM" id="MobiDB-lite"/>
    </source>
</evidence>
<evidence type="ECO:0000305" key="3"/>
<keyword id="KW-1185">Reference proteome</keyword>
<keyword id="KW-0687">Ribonucleoprotein</keyword>
<keyword id="KW-0689">Ribosomal protein</keyword>
<keyword id="KW-0694">RNA-binding</keyword>
<keyword id="KW-0699">rRNA-binding</keyword>
<name>RL15_DESHY</name>